<dbReference type="EC" id="2.6.1.52" evidence="1"/>
<dbReference type="EMBL" id="AE016827">
    <property type="protein sequence ID" value="AAU38180.1"/>
    <property type="molecule type" value="Genomic_DNA"/>
</dbReference>
<dbReference type="RefSeq" id="WP_011200745.1">
    <property type="nucleotide sequence ID" value="NC_006300.1"/>
</dbReference>
<dbReference type="SMR" id="Q65S80"/>
<dbReference type="STRING" id="221988.MS1573"/>
<dbReference type="KEGG" id="msu:MS1573"/>
<dbReference type="eggNOG" id="COG1932">
    <property type="taxonomic scope" value="Bacteria"/>
</dbReference>
<dbReference type="HOGENOM" id="CLU_034866_0_2_6"/>
<dbReference type="OrthoDB" id="9809412at2"/>
<dbReference type="UniPathway" id="UPA00135">
    <property type="reaction ID" value="UER00197"/>
</dbReference>
<dbReference type="UniPathway" id="UPA00244">
    <property type="reaction ID" value="UER00311"/>
</dbReference>
<dbReference type="Proteomes" id="UP000000607">
    <property type="component" value="Chromosome"/>
</dbReference>
<dbReference type="GO" id="GO:0005737">
    <property type="term" value="C:cytoplasm"/>
    <property type="evidence" value="ECO:0007669"/>
    <property type="project" value="UniProtKB-SubCell"/>
</dbReference>
<dbReference type="GO" id="GO:0004648">
    <property type="term" value="F:O-phospho-L-serine:2-oxoglutarate aminotransferase activity"/>
    <property type="evidence" value="ECO:0007669"/>
    <property type="project" value="UniProtKB-UniRule"/>
</dbReference>
<dbReference type="GO" id="GO:0030170">
    <property type="term" value="F:pyridoxal phosphate binding"/>
    <property type="evidence" value="ECO:0007669"/>
    <property type="project" value="UniProtKB-UniRule"/>
</dbReference>
<dbReference type="GO" id="GO:0006564">
    <property type="term" value="P:L-serine biosynthetic process"/>
    <property type="evidence" value="ECO:0007669"/>
    <property type="project" value="UniProtKB-UniRule"/>
</dbReference>
<dbReference type="GO" id="GO:0008615">
    <property type="term" value="P:pyridoxine biosynthetic process"/>
    <property type="evidence" value="ECO:0007669"/>
    <property type="project" value="UniProtKB-UniRule"/>
</dbReference>
<dbReference type="CDD" id="cd00611">
    <property type="entry name" value="PSAT_like"/>
    <property type="match status" value="1"/>
</dbReference>
<dbReference type="FunFam" id="3.40.640.10:FF:000010">
    <property type="entry name" value="Phosphoserine aminotransferase"/>
    <property type="match status" value="1"/>
</dbReference>
<dbReference type="FunFam" id="3.90.1150.10:FF:000006">
    <property type="entry name" value="Phosphoserine aminotransferase"/>
    <property type="match status" value="1"/>
</dbReference>
<dbReference type="Gene3D" id="3.90.1150.10">
    <property type="entry name" value="Aspartate Aminotransferase, domain 1"/>
    <property type="match status" value="1"/>
</dbReference>
<dbReference type="Gene3D" id="3.40.640.10">
    <property type="entry name" value="Type I PLP-dependent aspartate aminotransferase-like (Major domain)"/>
    <property type="match status" value="1"/>
</dbReference>
<dbReference type="HAMAP" id="MF_00160">
    <property type="entry name" value="SerC_aminotrans_5"/>
    <property type="match status" value="1"/>
</dbReference>
<dbReference type="InterPro" id="IPR000192">
    <property type="entry name" value="Aminotrans_V_dom"/>
</dbReference>
<dbReference type="InterPro" id="IPR022278">
    <property type="entry name" value="Pser_aminoTfrase"/>
</dbReference>
<dbReference type="InterPro" id="IPR015424">
    <property type="entry name" value="PyrdxlP-dep_Trfase"/>
</dbReference>
<dbReference type="InterPro" id="IPR015421">
    <property type="entry name" value="PyrdxlP-dep_Trfase_major"/>
</dbReference>
<dbReference type="InterPro" id="IPR015422">
    <property type="entry name" value="PyrdxlP-dep_Trfase_small"/>
</dbReference>
<dbReference type="NCBIfam" id="NF003764">
    <property type="entry name" value="PRK05355.1"/>
    <property type="match status" value="1"/>
</dbReference>
<dbReference type="NCBIfam" id="TIGR01364">
    <property type="entry name" value="serC_1"/>
    <property type="match status" value="1"/>
</dbReference>
<dbReference type="PANTHER" id="PTHR43247">
    <property type="entry name" value="PHOSPHOSERINE AMINOTRANSFERASE"/>
    <property type="match status" value="1"/>
</dbReference>
<dbReference type="PANTHER" id="PTHR43247:SF1">
    <property type="entry name" value="PHOSPHOSERINE AMINOTRANSFERASE"/>
    <property type="match status" value="1"/>
</dbReference>
<dbReference type="Pfam" id="PF00266">
    <property type="entry name" value="Aminotran_5"/>
    <property type="match status" value="1"/>
</dbReference>
<dbReference type="PIRSF" id="PIRSF000525">
    <property type="entry name" value="SerC"/>
    <property type="match status" value="1"/>
</dbReference>
<dbReference type="SUPFAM" id="SSF53383">
    <property type="entry name" value="PLP-dependent transferases"/>
    <property type="match status" value="1"/>
</dbReference>
<comment type="function">
    <text evidence="1">Catalyzes the reversible conversion of 3-phosphohydroxypyruvate to phosphoserine and of 3-hydroxy-2-oxo-4-phosphonooxybutanoate to phosphohydroxythreonine.</text>
</comment>
<comment type="catalytic activity">
    <reaction evidence="1">
        <text>O-phospho-L-serine + 2-oxoglutarate = 3-phosphooxypyruvate + L-glutamate</text>
        <dbReference type="Rhea" id="RHEA:14329"/>
        <dbReference type="ChEBI" id="CHEBI:16810"/>
        <dbReference type="ChEBI" id="CHEBI:18110"/>
        <dbReference type="ChEBI" id="CHEBI:29985"/>
        <dbReference type="ChEBI" id="CHEBI:57524"/>
        <dbReference type="EC" id="2.6.1.52"/>
    </reaction>
</comment>
<comment type="catalytic activity">
    <reaction evidence="1">
        <text>4-(phosphooxy)-L-threonine + 2-oxoglutarate = (R)-3-hydroxy-2-oxo-4-phosphooxybutanoate + L-glutamate</text>
        <dbReference type="Rhea" id="RHEA:16573"/>
        <dbReference type="ChEBI" id="CHEBI:16810"/>
        <dbReference type="ChEBI" id="CHEBI:29985"/>
        <dbReference type="ChEBI" id="CHEBI:58452"/>
        <dbReference type="ChEBI" id="CHEBI:58538"/>
        <dbReference type="EC" id="2.6.1.52"/>
    </reaction>
</comment>
<comment type="cofactor">
    <cofactor evidence="1">
        <name>pyridoxal 5'-phosphate</name>
        <dbReference type="ChEBI" id="CHEBI:597326"/>
    </cofactor>
    <text evidence="1">Binds 1 pyridoxal phosphate per subunit.</text>
</comment>
<comment type="pathway">
    <text evidence="1">Amino-acid biosynthesis; L-serine biosynthesis; L-serine from 3-phospho-D-glycerate: step 2/3.</text>
</comment>
<comment type="pathway">
    <text evidence="1">Cofactor biosynthesis; pyridoxine 5'-phosphate biosynthesis; pyridoxine 5'-phosphate from D-erythrose 4-phosphate: step 3/5.</text>
</comment>
<comment type="subunit">
    <text evidence="1">Homodimer.</text>
</comment>
<comment type="subcellular location">
    <subcellularLocation>
        <location evidence="1">Cytoplasm</location>
    </subcellularLocation>
</comment>
<comment type="similarity">
    <text evidence="1">Belongs to the class-V pyridoxal-phosphate-dependent aminotransferase family. SerC subfamily.</text>
</comment>
<protein>
    <recommendedName>
        <fullName evidence="1">Phosphoserine aminotransferase</fullName>
        <ecNumber evidence="1">2.6.1.52</ecNumber>
    </recommendedName>
    <alternativeName>
        <fullName evidence="1">Phosphohydroxythreonine aminotransferase</fullName>
        <shortName evidence="1">PSAT</shortName>
    </alternativeName>
</protein>
<organism>
    <name type="scientific">Mannheimia succiniciproducens (strain KCTC 0769BP / MBEL55E)</name>
    <dbReference type="NCBI Taxonomy" id="221988"/>
    <lineage>
        <taxon>Bacteria</taxon>
        <taxon>Pseudomonadati</taxon>
        <taxon>Pseudomonadota</taxon>
        <taxon>Gammaproteobacteria</taxon>
        <taxon>Pasteurellales</taxon>
        <taxon>Pasteurellaceae</taxon>
        <taxon>Basfia</taxon>
    </lineage>
</organism>
<accession>Q65S80</accession>
<keyword id="KW-0028">Amino-acid biosynthesis</keyword>
<keyword id="KW-0032">Aminotransferase</keyword>
<keyword id="KW-0963">Cytoplasm</keyword>
<keyword id="KW-0663">Pyridoxal phosphate</keyword>
<keyword id="KW-0664">Pyridoxine biosynthesis</keyword>
<keyword id="KW-0718">Serine biosynthesis</keyword>
<keyword id="KW-0808">Transferase</keyword>
<feature type="chain" id="PRO_0000150186" description="Phosphoserine aminotransferase">
    <location>
        <begin position="1"/>
        <end position="361"/>
    </location>
</feature>
<feature type="binding site" evidence="1">
    <location>
        <position position="42"/>
    </location>
    <ligand>
        <name>L-glutamate</name>
        <dbReference type="ChEBI" id="CHEBI:29985"/>
    </ligand>
</feature>
<feature type="binding site" evidence="1">
    <location>
        <begin position="76"/>
        <end position="77"/>
    </location>
    <ligand>
        <name>pyridoxal 5'-phosphate</name>
        <dbReference type="ChEBI" id="CHEBI:597326"/>
    </ligand>
</feature>
<feature type="binding site" evidence="1">
    <location>
        <position position="102"/>
    </location>
    <ligand>
        <name>pyridoxal 5'-phosphate</name>
        <dbReference type="ChEBI" id="CHEBI:597326"/>
    </ligand>
</feature>
<feature type="binding site" evidence="1">
    <location>
        <position position="153"/>
    </location>
    <ligand>
        <name>pyridoxal 5'-phosphate</name>
        <dbReference type="ChEBI" id="CHEBI:597326"/>
    </ligand>
</feature>
<feature type="binding site" evidence="1">
    <location>
        <position position="173"/>
    </location>
    <ligand>
        <name>pyridoxal 5'-phosphate</name>
        <dbReference type="ChEBI" id="CHEBI:597326"/>
    </ligand>
</feature>
<feature type="binding site" evidence="1">
    <location>
        <position position="196"/>
    </location>
    <ligand>
        <name>pyridoxal 5'-phosphate</name>
        <dbReference type="ChEBI" id="CHEBI:597326"/>
    </ligand>
</feature>
<feature type="binding site" evidence="1">
    <location>
        <begin position="238"/>
        <end position="239"/>
    </location>
    <ligand>
        <name>pyridoxal 5'-phosphate</name>
        <dbReference type="ChEBI" id="CHEBI:597326"/>
    </ligand>
</feature>
<feature type="modified residue" description="N6-(pyridoxal phosphate)lysine" evidence="1">
    <location>
        <position position="197"/>
    </location>
</feature>
<gene>
    <name evidence="1" type="primary">serC</name>
    <name type="ordered locus">MS1573</name>
</gene>
<proteinExistence type="inferred from homology"/>
<sequence>MSNVFNFSAGPAMMPPAVLKKAQEELLNWQGQGTSVMEVSHRGKYFMELITQADKDFRELYNIPENYKILFLQGGARGQFAAIPMNLANNKGKALYLNTGHWSATAAKEARNFTEVDELNITEQIDGLTRVNRLDFSDIAEQYDYVHYCPNETITGVEINEIPNVGNAVLVADMSSNIMARKLDISKFGIIYAGAQKNLGPAGIVIVIVREDLIGHARKATPSIWNYEVQANADSMINTPPTFAWYLCSLVFKDLLANGGIDTVEKRNAQKAALLYDYLDQTVFYHNTIAKENRSVMNVTFTTGDDQLNAKFVAQATEAGLQALKGHKVFGGMRASIYNAMPVEGVEALIAFMKKFEAENA</sequence>
<name>SERC_MANSM</name>
<evidence type="ECO:0000255" key="1">
    <source>
        <dbReference type="HAMAP-Rule" id="MF_00160"/>
    </source>
</evidence>
<reference key="1">
    <citation type="journal article" date="2004" name="Nat. Biotechnol.">
        <title>The genome sequence of the capnophilic rumen bacterium Mannheimia succiniciproducens.</title>
        <authorList>
            <person name="Hong S.H."/>
            <person name="Kim J.S."/>
            <person name="Lee S.Y."/>
            <person name="In Y.H."/>
            <person name="Choi S.S."/>
            <person name="Rih J.-K."/>
            <person name="Kim C.H."/>
            <person name="Jeong H."/>
            <person name="Hur C.G."/>
            <person name="Kim J.J."/>
        </authorList>
    </citation>
    <scope>NUCLEOTIDE SEQUENCE [LARGE SCALE GENOMIC DNA]</scope>
    <source>
        <strain>KCTC 0769BP / MBEL55E</strain>
    </source>
</reference>